<feature type="chain" id="PRO_0000303495" description="tRNA N6-adenosine threonylcarbamoyltransferase">
    <location>
        <begin position="1"/>
        <end position="341"/>
    </location>
</feature>
<feature type="binding site" evidence="1">
    <location>
        <position position="111"/>
    </location>
    <ligand>
        <name>Fe cation</name>
        <dbReference type="ChEBI" id="CHEBI:24875"/>
    </ligand>
</feature>
<feature type="binding site" evidence="1">
    <location>
        <position position="115"/>
    </location>
    <ligand>
        <name>Fe cation</name>
        <dbReference type="ChEBI" id="CHEBI:24875"/>
    </ligand>
</feature>
<feature type="binding site" evidence="1">
    <location>
        <begin position="134"/>
        <end position="138"/>
    </location>
    <ligand>
        <name>substrate</name>
    </ligand>
</feature>
<feature type="binding site" evidence="1">
    <location>
        <position position="167"/>
    </location>
    <ligand>
        <name>substrate</name>
    </ligand>
</feature>
<feature type="binding site" evidence="1">
    <location>
        <position position="180"/>
    </location>
    <ligand>
        <name>substrate</name>
    </ligand>
</feature>
<feature type="binding site" evidence="1">
    <location>
        <position position="276"/>
    </location>
    <ligand>
        <name>substrate</name>
    </ligand>
</feature>
<feature type="binding site" evidence="1">
    <location>
        <position position="304"/>
    </location>
    <ligand>
        <name>Fe cation</name>
        <dbReference type="ChEBI" id="CHEBI:24875"/>
    </ligand>
</feature>
<accession>Q88QU6</accession>
<dbReference type="EC" id="2.3.1.234" evidence="1"/>
<dbReference type="EMBL" id="AE015451">
    <property type="protein sequence ID" value="AAN66021.1"/>
    <property type="molecule type" value="Genomic_DNA"/>
</dbReference>
<dbReference type="RefSeq" id="NP_742557.1">
    <property type="nucleotide sequence ID" value="NC_002947.4"/>
</dbReference>
<dbReference type="RefSeq" id="WP_010951736.1">
    <property type="nucleotide sequence ID" value="NZ_CP169744.1"/>
</dbReference>
<dbReference type="SMR" id="Q88QU6"/>
<dbReference type="STRING" id="160488.PP_0390"/>
<dbReference type="PaxDb" id="160488-PP_0390"/>
<dbReference type="GeneID" id="83677681"/>
<dbReference type="KEGG" id="ppu:PP_0390"/>
<dbReference type="PATRIC" id="fig|160488.4.peg.420"/>
<dbReference type="eggNOG" id="COG0533">
    <property type="taxonomic scope" value="Bacteria"/>
</dbReference>
<dbReference type="HOGENOM" id="CLU_023208_0_0_6"/>
<dbReference type="OrthoDB" id="9806197at2"/>
<dbReference type="PhylomeDB" id="Q88QU6"/>
<dbReference type="BioCyc" id="PPUT160488:G1G01-427-MONOMER"/>
<dbReference type="Proteomes" id="UP000000556">
    <property type="component" value="Chromosome"/>
</dbReference>
<dbReference type="GO" id="GO:0005737">
    <property type="term" value="C:cytoplasm"/>
    <property type="evidence" value="ECO:0007669"/>
    <property type="project" value="UniProtKB-SubCell"/>
</dbReference>
<dbReference type="GO" id="GO:0005506">
    <property type="term" value="F:iron ion binding"/>
    <property type="evidence" value="ECO:0007669"/>
    <property type="project" value="UniProtKB-UniRule"/>
</dbReference>
<dbReference type="GO" id="GO:0061711">
    <property type="term" value="F:N(6)-L-threonylcarbamoyladenine synthase activity"/>
    <property type="evidence" value="ECO:0007669"/>
    <property type="project" value="UniProtKB-EC"/>
</dbReference>
<dbReference type="GO" id="GO:0002949">
    <property type="term" value="P:tRNA threonylcarbamoyladenosine modification"/>
    <property type="evidence" value="ECO:0007669"/>
    <property type="project" value="UniProtKB-UniRule"/>
</dbReference>
<dbReference type="CDD" id="cd24133">
    <property type="entry name" value="ASKHA_NBD_TsaD_bac"/>
    <property type="match status" value="1"/>
</dbReference>
<dbReference type="FunFam" id="3.30.420.40:FF:000012">
    <property type="entry name" value="tRNA N6-adenosine threonylcarbamoyltransferase"/>
    <property type="match status" value="1"/>
</dbReference>
<dbReference type="FunFam" id="3.30.420.40:FF:000031">
    <property type="entry name" value="tRNA N6-adenosine threonylcarbamoyltransferase"/>
    <property type="match status" value="1"/>
</dbReference>
<dbReference type="Gene3D" id="3.30.420.40">
    <property type="match status" value="2"/>
</dbReference>
<dbReference type="HAMAP" id="MF_01445">
    <property type="entry name" value="TsaD"/>
    <property type="match status" value="1"/>
</dbReference>
<dbReference type="InterPro" id="IPR043129">
    <property type="entry name" value="ATPase_NBD"/>
</dbReference>
<dbReference type="InterPro" id="IPR000905">
    <property type="entry name" value="Gcp-like_dom"/>
</dbReference>
<dbReference type="InterPro" id="IPR017861">
    <property type="entry name" value="KAE1/TsaD"/>
</dbReference>
<dbReference type="InterPro" id="IPR022450">
    <property type="entry name" value="TsaD"/>
</dbReference>
<dbReference type="NCBIfam" id="TIGR00329">
    <property type="entry name" value="gcp_kae1"/>
    <property type="match status" value="1"/>
</dbReference>
<dbReference type="NCBIfam" id="TIGR03723">
    <property type="entry name" value="T6A_TsaD_YgjD"/>
    <property type="match status" value="1"/>
</dbReference>
<dbReference type="PANTHER" id="PTHR11735">
    <property type="entry name" value="TRNA N6-ADENOSINE THREONYLCARBAMOYLTRANSFERASE"/>
    <property type="match status" value="1"/>
</dbReference>
<dbReference type="PANTHER" id="PTHR11735:SF6">
    <property type="entry name" value="TRNA N6-ADENOSINE THREONYLCARBAMOYLTRANSFERASE, MITOCHONDRIAL"/>
    <property type="match status" value="1"/>
</dbReference>
<dbReference type="Pfam" id="PF00814">
    <property type="entry name" value="TsaD"/>
    <property type="match status" value="1"/>
</dbReference>
<dbReference type="PRINTS" id="PR00789">
    <property type="entry name" value="OSIALOPTASE"/>
</dbReference>
<dbReference type="SUPFAM" id="SSF53067">
    <property type="entry name" value="Actin-like ATPase domain"/>
    <property type="match status" value="2"/>
</dbReference>
<keyword id="KW-0012">Acyltransferase</keyword>
<keyword id="KW-0963">Cytoplasm</keyword>
<keyword id="KW-0408">Iron</keyword>
<keyword id="KW-0479">Metal-binding</keyword>
<keyword id="KW-1185">Reference proteome</keyword>
<keyword id="KW-0808">Transferase</keyword>
<keyword id="KW-0819">tRNA processing</keyword>
<comment type="function">
    <text evidence="1">Required for the formation of a threonylcarbamoyl group on adenosine at position 37 (t(6)A37) in tRNAs that read codons beginning with adenine. Is involved in the transfer of the threonylcarbamoyl moiety of threonylcarbamoyl-AMP (TC-AMP) to the N6 group of A37, together with TsaE and TsaB. TsaD likely plays a direct catalytic role in this reaction.</text>
</comment>
<comment type="catalytic activity">
    <reaction evidence="1">
        <text>L-threonylcarbamoyladenylate + adenosine(37) in tRNA = N(6)-L-threonylcarbamoyladenosine(37) in tRNA + AMP + H(+)</text>
        <dbReference type="Rhea" id="RHEA:37059"/>
        <dbReference type="Rhea" id="RHEA-COMP:10162"/>
        <dbReference type="Rhea" id="RHEA-COMP:10163"/>
        <dbReference type="ChEBI" id="CHEBI:15378"/>
        <dbReference type="ChEBI" id="CHEBI:73682"/>
        <dbReference type="ChEBI" id="CHEBI:74411"/>
        <dbReference type="ChEBI" id="CHEBI:74418"/>
        <dbReference type="ChEBI" id="CHEBI:456215"/>
        <dbReference type="EC" id="2.3.1.234"/>
    </reaction>
</comment>
<comment type="cofactor">
    <cofactor evidence="1">
        <name>Fe(2+)</name>
        <dbReference type="ChEBI" id="CHEBI:29033"/>
    </cofactor>
    <text evidence="1">Binds 1 Fe(2+) ion per subunit.</text>
</comment>
<comment type="subcellular location">
    <subcellularLocation>
        <location evidence="1">Cytoplasm</location>
    </subcellularLocation>
</comment>
<comment type="similarity">
    <text evidence="1">Belongs to the KAE1 / TsaD family.</text>
</comment>
<reference key="1">
    <citation type="journal article" date="2002" name="Environ. Microbiol.">
        <title>Complete genome sequence and comparative analysis of the metabolically versatile Pseudomonas putida KT2440.</title>
        <authorList>
            <person name="Nelson K.E."/>
            <person name="Weinel C."/>
            <person name="Paulsen I.T."/>
            <person name="Dodson R.J."/>
            <person name="Hilbert H."/>
            <person name="Martins dos Santos V.A.P."/>
            <person name="Fouts D.E."/>
            <person name="Gill S.R."/>
            <person name="Pop M."/>
            <person name="Holmes M."/>
            <person name="Brinkac L.M."/>
            <person name="Beanan M.J."/>
            <person name="DeBoy R.T."/>
            <person name="Daugherty S.C."/>
            <person name="Kolonay J.F."/>
            <person name="Madupu R."/>
            <person name="Nelson W.C."/>
            <person name="White O."/>
            <person name="Peterson J.D."/>
            <person name="Khouri H.M."/>
            <person name="Hance I."/>
            <person name="Chris Lee P."/>
            <person name="Holtzapple E.K."/>
            <person name="Scanlan D."/>
            <person name="Tran K."/>
            <person name="Moazzez A."/>
            <person name="Utterback T.R."/>
            <person name="Rizzo M."/>
            <person name="Lee K."/>
            <person name="Kosack D."/>
            <person name="Moestl D."/>
            <person name="Wedler H."/>
            <person name="Lauber J."/>
            <person name="Stjepandic D."/>
            <person name="Hoheisel J."/>
            <person name="Straetz M."/>
            <person name="Heim S."/>
            <person name="Kiewitz C."/>
            <person name="Eisen J.A."/>
            <person name="Timmis K.N."/>
            <person name="Duesterhoeft A."/>
            <person name="Tuemmler B."/>
            <person name="Fraser C.M."/>
        </authorList>
    </citation>
    <scope>NUCLEOTIDE SEQUENCE [LARGE SCALE GENOMIC DNA]</scope>
    <source>
        <strain>ATCC 47054 / DSM 6125 / CFBP 8728 / NCIMB 11950 / KT2440</strain>
    </source>
</reference>
<organism>
    <name type="scientific">Pseudomonas putida (strain ATCC 47054 / DSM 6125 / CFBP 8728 / NCIMB 11950 / KT2440)</name>
    <dbReference type="NCBI Taxonomy" id="160488"/>
    <lineage>
        <taxon>Bacteria</taxon>
        <taxon>Pseudomonadati</taxon>
        <taxon>Pseudomonadota</taxon>
        <taxon>Gammaproteobacteria</taxon>
        <taxon>Pseudomonadales</taxon>
        <taxon>Pseudomonadaceae</taxon>
        <taxon>Pseudomonas</taxon>
    </lineage>
</organism>
<proteinExistence type="inferred from homology"/>
<evidence type="ECO:0000255" key="1">
    <source>
        <dbReference type="HAMAP-Rule" id="MF_01445"/>
    </source>
</evidence>
<protein>
    <recommendedName>
        <fullName evidence="1">tRNA N6-adenosine threonylcarbamoyltransferase</fullName>
        <ecNumber evidence="1">2.3.1.234</ecNumber>
    </recommendedName>
    <alternativeName>
        <fullName evidence="1">N6-L-threonylcarbamoyladenine synthase</fullName>
        <shortName evidence="1">t(6)A synthase</shortName>
    </alternativeName>
    <alternativeName>
        <fullName evidence="1">t(6)A37 threonylcarbamoyladenosine biosynthesis protein TsaD</fullName>
    </alternativeName>
    <alternativeName>
        <fullName evidence="1">tRNA threonylcarbamoyladenosine biosynthesis protein TsaD</fullName>
    </alternativeName>
</protein>
<sequence>MLVLGLETSCDETGVALYDSERGLLADALFSQIDLHRVFGGVVPELASRDHVKRMLPLIRQVLDEAGCVATEIDAIAYTAGPGLVGALLVGASCAQALAFAWDIPAIGVHHMEGHLLAPMLEENPPEFPFVALLVSGGHTQLVRVDGIGQYELLGESLDDAAGEAFDKTAKLIGLNYPGGPEIARLAEQGVPGRFVFPRPMTDRPGLEFSFSGLKTFALNTWQQCKNAGDDSEQTRCDLSLAFQQAVVETLTIKCKRALKQTGLKRLVIAGGVSANKALRASLEDMLGSIKGNVYYARPQFCTDNGAMIAYAGCQRLLAGQQQDLAISVQARWPMEQLPPL</sequence>
<name>TSAD_PSEPK</name>
<gene>
    <name evidence="1" type="primary">tsaD</name>
    <name type="synonym">gcp</name>
    <name type="ordered locus">PP_0390</name>
</gene>